<reference key="1">
    <citation type="journal article" date="1999" name="Nature">
        <title>The DNA sequence of human chromosome 22.</title>
        <authorList>
            <person name="Dunham I."/>
            <person name="Hunt A.R."/>
            <person name="Collins J.E."/>
            <person name="Bruskiewich R."/>
            <person name="Beare D.M."/>
            <person name="Clamp M."/>
            <person name="Smink L.J."/>
            <person name="Ainscough R."/>
            <person name="Almeida J.P."/>
            <person name="Babbage A.K."/>
            <person name="Bagguley C."/>
            <person name="Bailey J."/>
            <person name="Barlow K.F."/>
            <person name="Bates K.N."/>
            <person name="Beasley O.P."/>
            <person name="Bird C.P."/>
            <person name="Blakey S.E."/>
            <person name="Bridgeman A.M."/>
            <person name="Buck D."/>
            <person name="Burgess J."/>
            <person name="Burrill W.D."/>
            <person name="Burton J."/>
            <person name="Carder C."/>
            <person name="Carter N.P."/>
            <person name="Chen Y."/>
            <person name="Clark G."/>
            <person name="Clegg S.M."/>
            <person name="Cobley V.E."/>
            <person name="Cole C.G."/>
            <person name="Collier R.E."/>
            <person name="Connor R."/>
            <person name="Conroy D."/>
            <person name="Corby N.R."/>
            <person name="Coville G.J."/>
            <person name="Cox A.V."/>
            <person name="Davis J."/>
            <person name="Dawson E."/>
            <person name="Dhami P.D."/>
            <person name="Dockree C."/>
            <person name="Dodsworth S.J."/>
            <person name="Durbin R.M."/>
            <person name="Ellington A.G."/>
            <person name="Evans K.L."/>
            <person name="Fey J.M."/>
            <person name="Fleming K."/>
            <person name="French L."/>
            <person name="Garner A.A."/>
            <person name="Gilbert J.G.R."/>
            <person name="Goward M.E."/>
            <person name="Grafham D.V."/>
            <person name="Griffiths M.N.D."/>
            <person name="Hall C."/>
            <person name="Hall R.E."/>
            <person name="Hall-Tamlyn G."/>
            <person name="Heathcott R.W."/>
            <person name="Ho S."/>
            <person name="Holmes S."/>
            <person name="Hunt S.E."/>
            <person name="Jones M.C."/>
            <person name="Kershaw J."/>
            <person name="Kimberley A.M."/>
            <person name="King A."/>
            <person name="Laird G.K."/>
            <person name="Langford C.F."/>
            <person name="Leversha M.A."/>
            <person name="Lloyd C."/>
            <person name="Lloyd D.M."/>
            <person name="Martyn I.D."/>
            <person name="Mashreghi-Mohammadi M."/>
            <person name="Matthews L.H."/>
            <person name="Mccann O.T."/>
            <person name="Mcclay J."/>
            <person name="Mclaren S."/>
            <person name="McMurray A.A."/>
            <person name="Milne S.A."/>
            <person name="Mortimore B.J."/>
            <person name="Odell C.N."/>
            <person name="Pavitt R."/>
            <person name="Pearce A.V."/>
            <person name="Pearson D."/>
            <person name="Phillimore B.J.C.T."/>
            <person name="Phillips S.H."/>
            <person name="Plumb R.W."/>
            <person name="Ramsay H."/>
            <person name="Ramsey Y."/>
            <person name="Rogers L."/>
            <person name="Ross M.T."/>
            <person name="Scott C.E."/>
            <person name="Sehra H.K."/>
            <person name="Skuce C.D."/>
            <person name="Smalley S."/>
            <person name="Smith M.L."/>
            <person name="Soderlund C."/>
            <person name="Spragon L."/>
            <person name="Steward C.A."/>
            <person name="Sulston J.E."/>
            <person name="Swann R.M."/>
            <person name="Vaudin M."/>
            <person name="Wall M."/>
            <person name="Wallis J.M."/>
            <person name="Whiteley M.N."/>
            <person name="Willey D.L."/>
            <person name="Williams L."/>
            <person name="Williams S.A."/>
            <person name="Williamson H."/>
            <person name="Wilmer T.E."/>
            <person name="Wilming L."/>
            <person name="Wright C.L."/>
            <person name="Hubbard T."/>
            <person name="Bentley D.R."/>
            <person name="Beck S."/>
            <person name="Rogers J."/>
            <person name="Shimizu N."/>
            <person name="Minoshima S."/>
            <person name="Kawasaki K."/>
            <person name="Sasaki T."/>
            <person name="Asakawa S."/>
            <person name="Kudoh J."/>
            <person name="Shintani A."/>
            <person name="Shibuya K."/>
            <person name="Yoshizaki Y."/>
            <person name="Aoki N."/>
            <person name="Mitsuyama S."/>
            <person name="Roe B.A."/>
            <person name="Chen F."/>
            <person name="Chu L."/>
            <person name="Crabtree J."/>
            <person name="Deschamps S."/>
            <person name="Do A."/>
            <person name="Do T."/>
            <person name="Dorman A."/>
            <person name="Fang F."/>
            <person name="Fu Y."/>
            <person name="Hu P."/>
            <person name="Hua A."/>
            <person name="Kenton S."/>
            <person name="Lai H."/>
            <person name="Lao H.I."/>
            <person name="Lewis J."/>
            <person name="Lewis S."/>
            <person name="Lin S.-P."/>
            <person name="Loh P."/>
            <person name="Malaj E."/>
            <person name="Nguyen T."/>
            <person name="Pan H."/>
            <person name="Phan S."/>
            <person name="Qi S."/>
            <person name="Qian Y."/>
            <person name="Ray L."/>
            <person name="Ren Q."/>
            <person name="Shaull S."/>
            <person name="Sloan D."/>
            <person name="Song L."/>
            <person name="Wang Q."/>
            <person name="Wang Y."/>
            <person name="Wang Z."/>
            <person name="White J."/>
            <person name="Willingham D."/>
            <person name="Wu H."/>
            <person name="Yao Z."/>
            <person name="Zhan M."/>
            <person name="Zhang G."/>
            <person name="Chissoe S."/>
            <person name="Murray J."/>
            <person name="Miller N."/>
            <person name="Minx P."/>
            <person name="Fulton R."/>
            <person name="Johnson D."/>
            <person name="Bemis G."/>
            <person name="Bentley D."/>
            <person name="Bradshaw H."/>
            <person name="Bourne S."/>
            <person name="Cordes M."/>
            <person name="Du Z."/>
            <person name="Fulton L."/>
            <person name="Goela D."/>
            <person name="Graves T."/>
            <person name="Hawkins J."/>
            <person name="Hinds K."/>
            <person name="Kemp K."/>
            <person name="Latreille P."/>
            <person name="Layman D."/>
            <person name="Ozersky P."/>
            <person name="Rohlfing T."/>
            <person name="Scheet P."/>
            <person name="Walker C."/>
            <person name="Wamsley A."/>
            <person name="Wohldmann P."/>
            <person name="Pepin K."/>
            <person name="Nelson J."/>
            <person name="Korf I."/>
            <person name="Bedell J.A."/>
            <person name="Hillier L.W."/>
            <person name="Mardis E."/>
            <person name="Waterston R."/>
            <person name="Wilson R."/>
            <person name="Emanuel B.S."/>
            <person name="Shaikh T."/>
            <person name="Kurahashi H."/>
            <person name="Saitta S."/>
            <person name="Budarf M.L."/>
            <person name="McDermid H.E."/>
            <person name="Johnson A."/>
            <person name="Wong A.C.C."/>
            <person name="Morrow B.E."/>
            <person name="Edelmann L."/>
            <person name="Kim U.J."/>
            <person name="Shizuya H."/>
            <person name="Simon M.I."/>
            <person name="Dumanski J.P."/>
            <person name="Peyrard M."/>
            <person name="Kedra D."/>
            <person name="Seroussi E."/>
            <person name="Fransson I."/>
            <person name="Tapia I."/>
            <person name="Bruder C.E."/>
            <person name="O'Brien K.P."/>
            <person name="Wilkinson P."/>
            <person name="Bodenteich A."/>
            <person name="Hartman K."/>
            <person name="Hu X."/>
            <person name="Khan A.S."/>
            <person name="Lane L."/>
            <person name="Tilahun Y."/>
            <person name="Wright H."/>
        </authorList>
    </citation>
    <scope>NUCLEOTIDE SEQUENCE [LARGE SCALE GENOMIC DNA]</scope>
</reference>
<name>RIM3B_HUMAN</name>
<organism>
    <name type="scientific">Homo sapiens</name>
    <name type="common">Human</name>
    <dbReference type="NCBI Taxonomy" id="9606"/>
    <lineage>
        <taxon>Eukaryota</taxon>
        <taxon>Metazoa</taxon>
        <taxon>Chordata</taxon>
        <taxon>Craniata</taxon>
        <taxon>Vertebrata</taxon>
        <taxon>Euteleostomi</taxon>
        <taxon>Mammalia</taxon>
        <taxon>Eutheria</taxon>
        <taxon>Euarchontoglires</taxon>
        <taxon>Primates</taxon>
        <taxon>Haplorrhini</taxon>
        <taxon>Catarrhini</taxon>
        <taxon>Hominidae</taxon>
        <taxon>Homo</taxon>
    </lineage>
</organism>
<proteinExistence type="inferred from homology"/>
<gene>
    <name type="primary">RIMBP3B</name>
</gene>
<comment type="function">
    <text evidence="1">Probable component of the manchette, a microtubule-based structure which plays a key role in sperm head morphogenesis during late stages of sperm development.</text>
</comment>
<comment type="subunit">
    <text evidence="1">Interacts with LRGUK (via guanylate kinase-like domain). Interacts (via C-terminus) with HOOK1 (via coiled-coil region).</text>
</comment>
<comment type="subcellular location">
    <subcellularLocation>
        <location evidence="1">Cytoplasm</location>
        <location evidence="1">Cytoskeleton</location>
    </subcellularLocation>
</comment>
<comment type="similarity">
    <text evidence="6">Belongs to the RIMBP family.</text>
</comment>
<comment type="caution">
    <text evidence="6">It is uncertain whether Met-1 or Met-95 is the initiator.</text>
</comment>
<sequence>MAKDSPSPLGASPKKPGCSSPAAAVLENQRRELEKLRAELEAERAGWRAERRRFAARERQLREEAERERRQLADRLRSKWEAQRSRELRQLQEEMQREREAEIRQLLRWKEAEQRQLQQLLHRERDGVVRQARELQRQLAEELVNRGHCSRPGASEVSAAQCRCRLQEVLAQLRWQTDGEQAARIRYLQAALEVERQLFLKYILAHFRGHPALSGSPDPQAVHSLEEPLPQTSSGSCHAPKPACQLGSLDSLSAEVGVRSRSLGLVSSACSSSPDGLLSTHASSLDCFAPACSRSLDSTRSLPKASKSEERPSSPDTSTPGSRRLSPPPSPLPPPPPPSAHRKLSNPRGGEGSESQPCEVLTPSPPGLGHHELIKLNWLLAKALWVLARRCYTLQEENKQLRRAGCPYQADEKVKRLKVKRAELTGLARRLADRARELQETNLRAVSAPIPGESCAGLELCQVFARQRARDLSEQASAPLAKDKQIEELRQECHLLQARVASGPCSDLHTGRGGPCTQWLNVRDLDRLQRESQREVLRLQRQLMLQQGNGGAWPEAGGQSATCEEVRRQMLALERELDQRRRECQELGTQAAPARRRGEEAETQLQAALLKNAWLAEENGRLQAKTDWVRKVEAENSEVRGHLGRACQERDASGLIAEQLLQQAARGQDRQQQLQRDPQKALCDLHPSWKEIQALQCRPGHPPEQPWETSQMPESQVKGSRRPKFHARPEDYAVSQPNRDIQEKREASLEESPVALGESASVPQVSETVPASQPLSKKTSSQSNSSSEGSMWATVPSSPTLDRDTASEVDDLEPDSVSLALEMGGSAAPAAPKLKIFMAQYNYNPFEGPNDHPEGELPLTAGDYIYIFGDMDEDGFYEGELDDGRRGLVPSNFVEQIPDSYIPGCLPAKSPDLGPSQLPAGQDEALEEDSLLSGKAQGMVDRGLCQMVRVGSKTEVATEILDTKTEACQLGLLQSMGKQGLSRPLLGTKGVLRMAPMQLHLQNVTATSANITWVYSSHRHPHVVYLDDREHALTPAGVSCYTFQGLCPGTHYRVRVEVRLPWDLLQVYWGTMSSTVTFDTLLAGPPYPPLEVLVERHASPGVLVVSWLPVTIDSAGSSNGVQVTGYAVYADGLKVCEVADATAGSTVLEFSQLQVPLTWQKVSVRTMSLCGESLDSVPAQIPEDFFMCHRWPETPPFSYTCGDPSTYRVTFPVCPQKLSLAPPSAKASPHNPGSCGEPQAKFLEAFFEEPPRRQSPVSNLGSEGECPSSGAGSQAQELAEAWEGCRKDLLFQKSPQNHRPPSVSDQPGEKENCYQHMGTSKSPAPGFIHLRTECGPRKEPCQEKAALERVLRQKQDAQGFTPPQLGASQQYASDFHNVLKEEQEALCLDLRGTERREERREPEPHSRQGQALGVKRGCQLHEPSSALCPAPSAKVIKMPRGGPQQLGTGANTPARVFVALSDYNPLVMSANLKAAEEELVFQKRQLLRVWGSQDTHDFYLSECNRQVGNIPGRLVAEMEVGTEQTDRRWRSPAQGHLPSVAHLEDFQGLTIPQGSSLVLQGNSKRLPLWTPKIMIAALDYDPGDGQMGGQGKGRLALRAGDVVMVYGPMDDQGFYYGELGGHRGLVPAHLLDHMSLHGH</sequence>
<keyword id="KW-0175">Coiled coil</keyword>
<keyword id="KW-0963">Cytoplasm</keyword>
<keyword id="KW-0206">Cytoskeleton</keyword>
<keyword id="KW-0221">Differentiation</keyword>
<keyword id="KW-1185">Reference proteome</keyword>
<keyword id="KW-0677">Repeat</keyword>
<keyword id="KW-0728">SH3 domain</keyword>
<keyword id="KW-0744">Spermatogenesis</keyword>
<evidence type="ECO:0000250" key="1">
    <source>
        <dbReference type="UniProtKB" id="Q3V0F0"/>
    </source>
</evidence>
<evidence type="ECO:0000255" key="2"/>
<evidence type="ECO:0000255" key="3">
    <source>
        <dbReference type="PROSITE-ProRule" id="PRU00192"/>
    </source>
</evidence>
<evidence type="ECO:0000255" key="4">
    <source>
        <dbReference type="PROSITE-ProRule" id="PRU00316"/>
    </source>
</evidence>
<evidence type="ECO:0000256" key="5">
    <source>
        <dbReference type="SAM" id="MobiDB-lite"/>
    </source>
</evidence>
<evidence type="ECO:0000305" key="6"/>
<dbReference type="EMBL" id="AP000552">
    <property type="status" value="NOT_ANNOTATED_CDS"/>
    <property type="molecule type" value="Genomic_DNA"/>
</dbReference>
<dbReference type="CCDS" id="CCDS46668.1"/>
<dbReference type="RefSeq" id="NP_001122107.1">
    <property type="nucleotide sequence ID" value="NM_001128635.2"/>
</dbReference>
<dbReference type="SMR" id="A6NNM3"/>
<dbReference type="BioGRID" id="136911">
    <property type="interactions" value="1"/>
</dbReference>
<dbReference type="FunCoup" id="A6NNM3">
    <property type="interactions" value="12"/>
</dbReference>
<dbReference type="STRING" id="9606.ENSP00000479326"/>
<dbReference type="GlyGen" id="A6NNM3">
    <property type="glycosylation" value="1 site"/>
</dbReference>
<dbReference type="iPTMnet" id="A6NNM3"/>
<dbReference type="PhosphoSitePlus" id="A6NNM3"/>
<dbReference type="BioMuta" id="RIMBP3B"/>
<dbReference type="jPOST" id="A6NNM3"/>
<dbReference type="MassIVE" id="A6NNM3"/>
<dbReference type="PaxDb" id="9606-ENSP00000479326"/>
<dbReference type="PeptideAtlas" id="A6NNM3"/>
<dbReference type="ProteomicsDB" id="1620"/>
<dbReference type="Antibodypedia" id="82393">
    <property type="antibodies" value="1 antibodies from 1 providers"/>
</dbReference>
<dbReference type="DNASU" id="440804"/>
<dbReference type="Ensembl" id="ENST00000620804.2">
    <property type="protein sequence ID" value="ENSP00000479326.1"/>
    <property type="gene ID" value="ENSG00000274600.2"/>
</dbReference>
<dbReference type="GeneID" id="440804"/>
<dbReference type="KEGG" id="hsa:440804"/>
<dbReference type="MANE-Select" id="ENST00000620804.2">
    <property type="protein sequence ID" value="ENSP00000479326.1"/>
    <property type="RefSeq nucleotide sequence ID" value="NM_001128635.2"/>
    <property type="RefSeq protein sequence ID" value="NP_001122107.1"/>
</dbReference>
<dbReference type="UCSC" id="uc002zuq.5">
    <property type="organism name" value="human"/>
</dbReference>
<dbReference type="AGR" id="HGNC:33891"/>
<dbReference type="CTD" id="440804"/>
<dbReference type="GeneCards" id="RIMBP3B"/>
<dbReference type="HGNC" id="HGNC:33891">
    <property type="gene designation" value="RIMBP3B"/>
</dbReference>
<dbReference type="HPA" id="ENSG00000274600">
    <property type="expression patterns" value="Tissue enriched (testis)"/>
</dbReference>
<dbReference type="MIM" id="612700">
    <property type="type" value="gene"/>
</dbReference>
<dbReference type="neXtProt" id="NX_A6NNM3"/>
<dbReference type="VEuPathDB" id="HostDB:ENSG00000274600"/>
<dbReference type="eggNOG" id="KOG3632">
    <property type="taxonomic scope" value="Eukaryota"/>
</dbReference>
<dbReference type="GeneTree" id="ENSGT00950000183203"/>
<dbReference type="HOGENOM" id="CLU_001979_2_1_1"/>
<dbReference type="InParanoid" id="A6NNM3"/>
<dbReference type="OMA" id="NSFHIAP"/>
<dbReference type="OrthoDB" id="4158657at2759"/>
<dbReference type="PAN-GO" id="A6NNM3">
    <property type="GO annotations" value="5 GO annotations based on evolutionary models"/>
</dbReference>
<dbReference type="PhylomeDB" id="A6NNM3"/>
<dbReference type="TreeFam" id="TF316230"/>
<dbReference type="PathwayCommons" id="A6NNM3"/>
<dbReference type="SIGNOR" id="A6NNM3"/>
<dbReference type="BioGRID-ORCS" id="440804">
    <property type="hits" value="52 hits in 1026 CRISPR screens"/>
</dbReference>
<dbReference type="GenomeRNAi" id="440804"/>
<dbReference type="Pharos" id="A6NNM3">
    <property type="development level" value="Tdark"/>
</dbReference>
<dbReference type="PRO" id="PR:A6NNM3"/>
<dbReference type="Proteomes" id="UP000005640">
    <property type="component" value="Chromosome 22"/>
</dbReference>
<dbReference type="RNAct" id="A6NNM3">
    <property type="molecule type" value="protein"/>
</dbReference>
<dbReference type="Bgee" id="ENSG00000274600">
    <property type="expression patterns" value="Expressed in male germ line stem cell (sensu Vertebrata) in testis and 30 other cell types or tissues"/>
</dbReference>
<dbReference type="GO" id="GO:0005737">
    <property type="term" value="C:cytoplasm"/>
    <property type="evidence" value="ECO:0007669"/>
    <property type="project" value="UniProtKB-KW"/>
</dbReference>
<dbReference type="GO" id="GO:0005856">
    <property type="term" value="C:cytoskeleton"/>
    <property type="evidence" value="ECO:0007669"/>
    <property type="project" value="UniProtKB-SubCell"/>
</dbReference>
<dbReference type="GO" id="GO:0005634">
    <property type="term" value="C:nucleus"/>
    <property type="evidence" value="ECO:0000318"/>
    <property type="project" value="GO_Central"/>
</dbReference>
<dbReference type="GO" id="GO:0030156">
    <property type="term" value="F:benzodiazepine receptor binding"/>
    <property type="evidence" value="ECO:0000318"/>
    <property type="project" value="GO_Central"/>
</dbReference>
<dbReference type="GO" id="GO:0009566">
    <property type="term" value="P:fertilization"/>
    <property type="evidence" value="ECO:0000318"/>
    <property type="project" value="GO_Central"/>
</dbReference>
<dbReference type="GO" id="GO:0007286">
    <property type="term" value="P:spermatid development"/>
    <property type="evidence" value="ECO:0000318"/>
    <property type="project" value="GO_Central"/>
</dbReference>
<dbReference type="CDD" id="cd00063">
    <property type="entry name" value="FN3"/>
    <property type="match status" value="1"/>
</dbReference>
<dbReference type="CDD" id="cd11851">
    <property type="entry name" value="SH3_RIM-BP"/>
    <property type="match status" value="1"/>
</dbReference>
<dbReference type="CDD" id="cd12014">
    <property type="entry name" value="SH3_RIM-BP_1"/>
    <property type="match status" value="1"/>
</dbReference>
<dbReference type="CDD" id="cd22249">
    <property type="entry name" value="UDM1_RNF168_RNF169-like"/>
    <property type="match status" value="1"/>
</dbReference>
<dbReference type="FunFam" id="2.30.30.40:FF:000006">
    <property type="entry name" value="RIMS-binding protein 2 isoform X1"/>
    <property type="match status" value="1"/>
</dbReference>
<dbReference type="FunFam" id="2.60.40.10:FF:000072">
    <property type="entry name" value="RIMS-binding protein 2 isoform X1"/>
    <property type="match status" value="1"/>
</dbReference>
<dbReference type="FunFam" id="2.30.30.40:FF:000232">
    <property type="entry name" value="RIMS-binding protein 3A-like"/>
    <property type="match status" value="1"/>
</dbReference>
<dbReference type="FunFam" id="2.30.30.40:FF:000246">
    <property type="entry name" value="RIMS-binding protein 3A-like"/>
    <property type="match status" value="1"/>
</dbReference>
<dbReference type="Gene3D" id="2.60.40.10">
    <property type="entry name" value="Immunoglobulins"/>
    <property type="match status" value="2"/>
</dbReference>
<dbReference type="Gene3D" id="2.30.30.40">
    <property type="entry name" value="SH3 Domains"/>
    <property type="match status" value="3"/>
</dbReference>
<dbReference type="InterPro" id="IPR003961">
    <property type="entry name" value="FN3_dom"/>
</dbReference>
<dbReference type="InterPro" id="IPR036116">
    <property type="entry name" value="FN3_sf"/>
</dbReference>
<dbReference type="InterPro" id="IPR013783">
    <property type="entry name" value="Ig-like_fold"/>
</dbReference>
<dbReference type="InterPro" id="IPR040325">
    <property type="entry name" value="RIMBP1/2/3"/>
</dbReference>
<dbReference type="InterPro" id="IPR036028">
    <property type="entry name" value="SH3-like_dom_sf"/>
</dbReference>
<dbReference type="InterPro" id="IPR001452">
    <property type="entry name" value="SH3_domain"/>
</dbReference>
<dbReference type="PANTHER" id="PTHR14234">
    <property type="entry name" value="RIM BINDING PROTEIN-RELATED"/>
    <property type="match status" value="1"/>
</dbReference>
<dbReference type="PANTHER" id="PTHR14234:SF21">
    <property type="entry name" value="RIMS-BINDING PROTEIN 3A-RELATED"/>
    <property type="match status" value="1"/>
</dbReference>
<dbReference type="Pfam" id="PF07653">
    <property type="entry name" value="SH3_2"/>
    <property type="match status" value="2"/>
</dbReference>
<dbReference type="SMART" id="SM00060">
    <property type="entry name" value="FN3"/>
    <property type="match status" value="2"/>
</dbReference>
<dbReference type="SMART" id="SM00326">
    <property type="entry name" value="SH3"/>
    <property type="match status" value="3"/>
</dbReference>
<dbReference type="SUPFAM" id="SSF49265">
    <property type="entry name" value="Fibronectin type III"/>
    <property type="match status" value="1"/>
</dbReference>
<dbReference type="SUPFAM" id="SSF50044">
    <property type="entry name" value="SH3-domain"/>
    <property type="match status" value="3"/>
</dbReference>
<dbReference type="PROSITE" id="PS50853">
    <property type="entry name" value="FN3"/>
    <property type="match status" value="2"/>
</dbReference>
<dbReference type="PROSITE" id="PS50002">
    <property type="entry name" value="SH3"/>
    <property type="match status" value="3"/>
</dbReference>
<protein>
    <recommendedName>
        <fullName>RIMS-binding protein 3B</fullName>
        <shortName>RIM-BP3.B</shortName>
    </recommendedName>
    <alternativeName>
        <fullName>RIMS-binding protein 3.2</fullName>
        <shortName>RIM-BP3.2</shortName>
    </alternativeName>
</protein>
<feature type="chain" id="PRO_0000332274" description="RIMS-binding protein 3B">
    <location>
        <begin position="1"/>
        <end position="1639"/>
    </location>
</feature>
<feature type="domain" description="SH3 1" evidence="3">
    <location>
        <begin position="832"/>
        <end position="899"/>
    </location>
</feature>
<feature type="domain" description="Fibronectin type-III 1" evidence="4">
    <location>
        <begin position="995"/>
        <end position="1083"/>
    </location>
</feature>
<feature type="domain" description="Fibronectin type-III 2" evidence="4">
    <location>
        <begin position="1088"/>
        <end position="1184"/>
    </location>
</feature>
<feature type="domain" description="SH3 2" evidence="3">
    <location>
        <begin position="1452"/>
        <end position="1520"/>
    </location>
</feature>
<feature type="domain" description="SH3 3" evidence="3">
    <location>
        <begin position="1569"/>
        <end position="1636"/>
    </location>
</feature>
<feature type="region of interest" description="Disordered" evidence="5">
    <location>
        <begin position="1"/>
        <end position="22"/>
    </location>
</feature>
<feature type="region of interest" description="Disordered" evidence="5">
    <location>
        <begin position="215"/>
        <end position="240"/>
    </location>
</feature>
<feature type="region of interest" description="Disordered" evidence="5">
    <location>
        <begin position="295"/>
        <end position="364"/>
    </location>
</feature>
<feature type="region of interest" description="Disordered" evidence="5">
    <location>
        <begin position="697"/>
        <end position="811"/>
    </location>
</feature>
<feature type="region of interest" description="Disordered" evidence="5">
    <location>
        <begin position="1251"/>
        <end position="1273"/>
    </location>
</feature>
<feature type="region of interest" description="Disordered" evidence="5">
    <location>
        <begin position="1292"/>
        <end position="1325"/>
    </location>
</feature>
<feature type="region of interest" description="Disordered" evidence="5">
    <location>
        <begin position="1392"/>
        <end position="1413"/>
    </location>
</feature>
<feature type="coiled-coil region" evidence="2">
    <location>
        <begin position="21"/>
        <end position="143"/>
    </location>
</feature>
<feature type="coiled-coil region" evidence="2">
    <location>
        <begin position="409"/>
        <end position="442"/>
    </location>
</feature>
<feature type="coiled-coil region" evidence="2">
    <location>
        <begin position="480"/>
        <end position="619"/>
    </location>
</feature>
<feature type="compositionally biased region" description="Pro residues" evidence="5">
    <location>
        <begin position="326"/>
        <end position="339"/>
    </location>
</feature>
<feature type="compositionally biased region" description="Polar residues" evidence="5">
    <location>
        <begin position="707"/>
        <end position="718"/>
    </location>
</feature>
<feature type="compositionally biased region" description="Polar residues" evidence="5">
    <location>
        <begin position="761"/>
        <end position="775"/>
    </location>
</feature>
<feature type="compositionally biased region" description="Low complexity" evidence="5">
    <location>
        <begin position="776"/>
        <end position="790"/>
    </location>
</feature>
<feature type="compositionally biased region" description="Polar residues" evidence="5">
    <location>
        <begin position="1293"/>
        <end position="1305"/>
    </location>
</feature>
<feature type="compositionally biased region" description="Basic and acidic residues" evidence="5">
    <location>
        <begin position="1392"/>
        <end position="1406"/>
    </location>
</feature>
<accession>A6NNM3</accession>